<dbReference type="EC" id="3.5.4.27"/>
<dbReference type="EMBL" id="X92082">
    <property type="protein sequence ID" value="CAA63064.1"/>
    <property type="molecule type" value="Genomic_DNA"/>
</dbReference>
<dbReference type="EMBL" id="CP001710">
    <property type="protein sequence ID" value="ADL58762.1"/>
    <property type="molecule type" value="Genomic_DNA"/>
</dbReference>
<dbReference type="PIR" id="S62193">
    <property type="entry name" value="S62193"/>
</dbReference>
<dbReference type="RefSeq" id="WP_013295984.1">
    <property type="nucleotide sequence ID" value="NC_014408.1"/>
</dbReference>
<dbReference type="SMR" id="P51616"/>
<dbReference type="STRING" id="79929.MTBMA_c11690"/>
<dbReference type="PaxDb" id="79929-MTBMA_c11690"/>
<dbReference type="GeneID" id="77399941"/>
<dbReference type="GeneID" id="9704877"/>
<dbReference type="KEGG" id="mmg:MTBMA_c11690"/>
<dbReference type="PATRIC" id="fig|79929.8.peg.1138"/>
<dbReference type="HOGENOM" id="CLU_876031_0_0_2"/>
<dbReference type="OrthoDB" id="105468at2157"/>
<dbReference type="UniPathway" id="UPA00640">
    <property type="reaction ID" value="UER00694"/>
</dbReference>
<dbReference type="Proteomes" id="UP000000345">
    <property type="component" value="Chromosome"/>
</dbReference>
<dbReference type="GO" id="GO:0005737">
    <property type="term" value="C:cytoplasm"/>
    <property type="evidence" value="ECO:0007669"/>
    <property type="project" value="UniProtKB-SubCell"/>
</dbReference>
<dbReference type="GO" id="GO:0018537">
    <property type="term" value="F:coenzyme F420-dependent N5,N10-methenyltetrahydromethanopterin reductase activity"/>
    <property type="evidence" value="ECO:0000314"/>
    <property type="project" value="MENGO"/>
</dbReference>
<dbReference type="GO" id="GO:0018759">
    <property type="term" value="F:methenyltetrahydromethanopterin cyclohydrolase activity"/>
    <property type="evidence" value="ECO:0007669"/>
    <property type="project" value="UniProtKB-UniRule"/>
</dbReference>
<dbReference type="GO" id="GO:0019386">
    <property type="term" value="P:methanogenesis, from carbon dioxide"/>
    <property type="evidence" value="ECO:0007669"/>
    <property type="project" value="UniProtKB-UniRule"/>
</dbReference>
<dbReference type="GO" id="GO:0006730">
    <property type="term" value="P:one-carbon metabolic process"/>
    <property type="evidence" value="ECO:0007669"/>
    <property type="project" value="UniProtKB-UniRule"/>
</dbReference>
<dbReference type="CDD" id="cd00545">
    <property type="entry name" value="MCH"/>
    <property type="match status" value="1"/>
</dbReference>
<dbReference type="Gene3D" id="3.10.340.11">
    <property type="entry name" value="Methenyltetrahydromethanopterin Cyclohydrolase, Chain A, domain 1"/>
    <property type="match status" value="1"/>
</dbReference>
<dbReference type="Gene3D" id="3.30.1030.10">
    <property type="entry name" value="Methenyltetrahydromethanopterin Cyclohydrolase, Chain A, domain 2"/>
    <property type="match status" value="1"/>
</dbReference>
<dbReference type="HAMAP" id="MF_00486">
    <property type="entry name" value="McH"/>
    <property type="match status" value="1"/>
</dbReference>
<dbReference type="InterPro" id="IPR003209">
    <property type="entry name" value="METHMP_CycHdrlase"/>
</dbReference>
<dbReference type="NCBIfam" id="TIGR03120">
    <property type="entry name" value="one_C_mch"/>
    <property type="match status" value="1"/>
</dbReference>
<dbReference type="Pfam" id="PF02289">
    <property type="entry name" value="MCH"/>
    <property type="match status" value="1"/>
</dbReference>
<dbReference type="SUPFAM" id="SSF56199">
    <property type="entry name" value="Methenyltetrahydromethanopterin cyclohydrolase"/>
    <property type="match status" value="1"/>
</dbReference>
<name>MCH_METTM</name>
<gene>
    <name type="primary">mch</name>
    <name type="ordered locus">MTBMA_c11690</name>
</gene>
<evidence type="ECO:0000269" key="1">
    <source>
    </source>
</evidence>
<evidence type="ECO:0000305" key="2"/>
<organism>
    <name type="scientific">Methanothermobacter marburgensis (strain ATCC BAA-927 / DSM 2133 / JCM 14651 / NBRC 100331 / OCM 82 / Marburg)</name>
    <name type="common">Methanobacterium thermoautotrophicum</name>
    <dbReference type="NCBI Taxonomy" id="79929"/>
    <lineage>
        <taxon>Archaea</taxon>
        <taxon>Methanobacteriati</taxon>
        <taxon>Methanobacteriota</taxon>
        <taxon>Methanomada group</taxon>
        <taxon>Methanobacteria</taxon>
        <taxon>Methanobacteriales</taxon>
        <taxon>Methanobacteriaceae</taxon>
        <taxon>Methanothermobacter</taxon>
    </lineage>
</organism>
<protein>
    <recommendedName>
        <fullName>Methenyltetrahydromethanopterin cyclohydrolase</fullName>
        <ecNumber>3.5.4.27</ecNumber>
    </recommendedName>
    <alternativeName>
        <fullName>Methenyl-H4MPT cyclohydrolase</fullName>
    </alternativeName>
</protein>
<accession>P51616</accession>
<accession>D9PX14</accession>
<feature type="initiator methionine" description="Removed" evidence="1">
    <location>
        <position position="1"/>
    </location>
</feature>
<feature type="chain" id="PRO_0000140885" description="Methenyltetrahydromethanopterin cyclohydrolase">
    <location>
        <begin position="2"/>
        <end position="320"/>
    </location>
</feature>
<proteinExistence type="evidence at protein level"/>
<reference key="1">
    <citation type="journal article" date="1996" name="Eur. J. Biochem.">
        <title>Primary structure of cyclohydrolase (Mch) from Methanobacterium thermoautotrophicum (strain Marburg) and functional expression of the mch gene in Escherichia coli.</title>
        <authorList>
            <person name="Vaupel M."/>
            <person name="Dietz H."/>
            <person name="Linder D."/>
            <person name="Thauer R.K."/>
        </authorList>
    </citation>
    <scope>NUCLEOTIDE SEQUENCE [GENOMIC DNA]</scope>
    <scope>PROTEIN SEQUENCE OF 2-30; 85-96; 195-204; 208-223 AND 252-282</scope>
    <source>
        <strain>ATCC BAA-927 / DSM 2133 / JCM 14651 / NBRC 100331 / OCM 82 / Marburg</strain>
    </source>
</reference>
<reference key="2">
    <citation type="journal article" date="2010" name="J. Bacteriol.">
        <title>Complete genome sequence of Methanothermobacter marburgensis, a methanoarchaeon model organism.</title>
        <authorList>
            <person name="Liesegang H."/>
            <person name="Kaster A.K."/>
            <person name="Wiezer A."/>
            <person name="Goenrich M."/>
            <person name="Wollherr A."/>
            <person name="Seedorf H."/>
            <person name="Gottschalk G."/>
            <person name="Thauer R.K."/>
        </authorList>
    </citation>
    <scope>NUCLEOTIDE SEQUENCE [LARGE SCALE GENOMIC DNA]</scope>
    <source>
        <strain>ATCC BAA-927 / DSM 2133 / JCM 14651 / NBRC 100331 / OCM 82 / Marburg</strain>
    </source>
</reference>
<sequence>MVSVNIEAKKIVDRMIEGADDLKISVDKLENGSTVIDCGVNVDGSIKAGELYTAVCLGGLADVGISIPGDLSERFALPSVKIKTDFPAISTLGAQKAGWSVSVGDFFALGSGPARALALKPAETYEEIGYQDEADIAVLTLEADKLPGEDVTDKIAEECDVSPENVYVLVAPTSSLVGSIQISGRVVENGTYKMLEALHFDVNKVKYAAGIAPIAPVDPDSLKAMGKTNDAVLFGGRTYYYIESEEGDDIKSLAENLPSSASEGYGKPFYDVFKEADYDFYKIDKGMFAPAEVVINDLRTGEVFRAGFVNEELLMKSFGL</sequence>
<keyword id="KW-0963">Cytoplasm</keyword>
<keyword id="KW-0903">Direct protein sequencing</keyword>
<keyword id="KW-0378">Hydrolase</keyword>
<keyword id="KW-0484">Methanogenesis</keyword>
<keyword id="KW-0554">One-carbon metabolism</keyword>
<comment type="function">
    <text>Catalyzes the reversible interconversion of 5-formyl-H(4)MPT to methenyl-H(4)MPT(+).</text>
</comment>
<comment type="catalytic activity">
    <reaction>
        <text>5,10-methenyl-5,6,7,8-tetrahydromethanopterin + H2O = N(5)-formyl-5,6,7,8-tetrahydromethanopterin + H(+)</text>
        <dbReference type="Rhea" id="RHEA:19053"/>
        <dbReference type="ChEBI" id="CHEBI:15377"/>
        <dbReference type="ChEBI" id="CHEBI:15378"/>
        <dbReference type="ChEBI" id="CHEBI:58018"/>
        <dbReference type="ChEBI" id="CHEBI:58337"/>
        <dbReference type="EC" id="3.5.4.27"/>
    </reaction>
</comment>
<comment type="pathway">
    <text>One-carbon metabolism; methanogenesis from CO(2); 5,10-methenyl-5,6,7,8-tetrahydromethanopterin from CO(2): step 3/3.</text>
</comment>
<comment type="subunit">
    <text>Homodimer.</text>
</comment>
<comment type="subcellular location">
    <subcellularLocation>
        <location>Cytoplasm</location>
    </subcellularLocation>
</comment>
<comment type="similarity">
    <text evidence="2">Belongs to the MCH family.</text>
</comment>